<evidence type="ECO:0000250" key="1">
    <source>
        <dbReference type="UniProtKB" id="P77836"/>
    </source>
</evidence>
<evidence type="ECO:0000305" key="2"/>
<comment type="function">
    <text evidence="1">Catalyzes phosphorolysis of the pyrimidine nucleosides uridine, thymidine and 2'-deoxyuridine with the formation of the corresponding pyrimidine base and ribose-1-phosphate.</text>
</comment>
<comment type="catalytic activity">
    <reaction evidence="1">
        <text>uridine + phosphate = alpha-D-ribose 1-phosphate + uracil</text>
        <dbReference type="Rhea" id="RHEA:24388"/>
        <dbReference type="ChEBI" id="CHEBI:16704"/>
        <dbReference type="ChEBI" id="CHEBI:17568"/>
        <dbReference type="ChEBI" id="CHEBI:43474"/>
        <dbReference type="ChEBI" id="CHEBI:57720"/>
        <dbReference type="EC" id="2.4.2.2"/>
    </reaction>
</comment>
<comment type="catalytic activity">
    <reaction evidence="1">
        <text>thymidine + phosphate = 2-deoxy-alpha-D-ribose 1-phosphate + thymine</text>
        <dbReference type="Rhea" id="RHEA:16037"/>
        <dbReference type="ChEBI" id="CHEBI:17748"/>
        <dbReference type="ChEBI" id="CHEBI:17821"/>
        <dbReference type="ChEBI" id="CHEBI:43474"/>
        <dbReference type="ChEBI" id="CHEBI:57259"/>
        <dbReference type="EC" id="2.4.2.2"/>
    </reaction>
</comment>
<comment type="catalytic activity">
    <reaction evidence="1">
        <text>2'-deoxyuridine + phosphate = 2-deoxy-alpha-D-ribose 1-phosphate + uracil</text>
        <dbReference type="Rhea" id="RHEA:22824"/>
        <dbReference type="ChEBI" id="CHEBI:16450"/>
        <dbReference type="ChEBI" id="CHEBI:17568"/>
        <dbReference type="ChEBI" id="CHEBI:43474"/>
        <dbReference type="ChEBI" id="CHEBI:57259"/>
        <dbReference type="EC" id="2.4.2.2"/>
    </reaction>
</comment>
<comment type="cofactor">
    <cofactor evidence="1">
        <name>K(+)</name>
        <dbReference type="ChEBI" id="CHEBI:29103"/>
    </cofactor>
    <text evidence="1">Binds 1 K(+) ion per subunit.</text>
</comment>
<comment type="subunit">
    <text evidence="1">Homodimer.</text>
</comment>
<comment type="similarity">
    <text evidence="2">Belongs to the thymidine/pyrimidine-nucleoside phosphorylase family.</text>
</comment>
<comment type="sequence caution" evidence="2">
    <conflict type="erroneous initiation">
        <sequence resource="EMBL-CDS" id="BAB95925"/>
    </conflict>
    <text>Extended N-terminus.</text>
</comment>
<reference key="1">
    <citation type="journal article" date="2002" name="Lancet">
        <title>Genome and virulence determinants of high virulence community-acquired MRSA.</title>
        <authorList>
            <person name="Baba T."/>
            <person name="Takeuchi F."/>
            <person name="Kuroda M."/>
            <person name="Yuzawa H."/>
            <person name="Aoki K."/>
            <person name="Oguchi A."/>
            <person name="Nagai Y."/>
            <person name="Iwama N."/>
            <person name="Asano K."/>
            <person name="Naimi T."/>
            <person name="Kuroda H."/>
            <person name="Cui L."/>
            <person name="Yamamoto K."/>
            <person name="Hiramatsu K."/>
        </authorList>
    </citation>
    <scope>NUCLEOTIDE SEQUENCE [LARGE SCALE GENOMIC DNA]</scope>
    <source>
        <strain>MW2</strain>
    </source>
</reference>
<accession>Q8NVF6</accession>
<protein>
    <recommendedName>
        <fullName>Pyrimidine-nucleoside phosphorylase</fullName>
        <shortName>PYNP</shortName>
        <shortName>Py-NPase</shortName>
        <ecNumber>2.4.2.2</ecNumber>
    </recommendedName>
</protein>
<organism>
    <name type="scientific">Staphylococcus aureus (strain MW2)</name>
    <dbReference type="NCBI Taxonomy" id="196620"/>
    <lineage>
        <taxon>Bacteria</taxon>
        <taxon>Bacillati</taxon>
        <taxon>Bacillota</taxon>
        <taxon>Bacilli</taxon>
        <taxon>Bacillales</taxon>
        <taxon>Staphylococcaceae</taxon>
        <taxon>Staphylococcus</taxon>
    </lineage>
</organism>
<keyword id="KW-0328">Glycosyltransferase</keyword>
<keyword id="KW-0479">Metal-binding</keyword>
<keyword id="KW-0630">Potassium</keyword>
<keyword id="KW-0808">Transferase</keyword>
<sequence length="433" mass="46378">MRMIDIIEKKRDGHTLTTEEINFFIDGYVKGDIPDYQASSLAMAIYFQDMNDDERAALTMAMVNSGDMIDLSDIKGVKVDKHSTGGVGDTTTLVLAPLVAAVDVPVAKMSGRGLGHTGGTIDKLEAIDGFHVEIDEATFVKLVNENKVAVVGQSGNLTPADKKLYALRDVTGTVNSIPLIASSIMSKKIAAGADAIVLDVKTGSGAFMKTLEDAEALAHAMVRIGNNVGRNTMAIISDMNQPLGRAIGNALELQEAIDTLKGQGPKDLTELVLTLGSQMVVLANKAETLEEARALLIEAINSGAALEKFKTFIKNQGGDETVIDHPERLPQAQYQIEYKAKKSGYVTELVSNDIGVASMMLGAGRLTKEDDIDLAVGIVLNKKIGDKVEEGESLLTIHSNRQDVDDVVKKLDSSITIADHVVSPTLIHKIIIE</sequence>
<feature type="chain" id="PRO_0000269538" description="Pyrimidine-nucleoside phosphorylase">
    <location>
        <begin position="1"/>
        <end position="433"/>
    </location>
</feature>
<feature type="binding site" evidence="1">
    <location>
        <begin position="81"/>
        <end position="83"/>
    </location>
    <ligand>
        <name>phosphate</name>
        <dbReference type="ChEBI" id="CHEBI:43474"/>
    </ligand>
</feature>
<feature type="binding site" evidence="1">
    <location>
        <position position="88"/>
    </location>
    <ligand>
        <name>K(+)</name>
        <dbReference type="ChEBI" id="CHEBI:29103"/>
    </ligand>
</feature>
<feature type="binding site" evidence="1">
    <location>
        <position position="90"/>
    </location>
    <ligand>
        <name>K(+)</name>
        <dbReference type="ChEBI" id="CHEBI:29103"/>
    </ligand>
</feature>
<feature type="binding site" evidence="1">
    <location>
        <position position="92"/>
    </location>
    <ligand>
        <name>phosphate</name>
        <dbReference type="ChEBI" id="CHEBI:43474"/>
    </ligand>
</feature>
<feature type="binding site" evidence="1">
    <location>
        <begin position="108"/>
        <end position="110"/>
    </location>
    <ligand>
        <name>phosphate</name>
        <dbReference type="ChEBI" id="CHEBI:43474"/>
    </ligand>
</feature>
<feature type="binding site" evidence="1">
    <location>
        <position position="120"/>
    </location>
    <ligand>
        <name>phosphate</name>
        <dbReference type="ChEBI" id="CHEBI:43474"/>
    </ligand>
</feature>
<feature type="binding site" evidence="1">
    <location>
        <position position="168"/>
    </location>
    <ligand>
        <name>substrate</name>
    </ligand>
</feature>
<feature type="binding site" evidence="1">
    <location>
        <position position="187"/>
    </location>
    <ligand>
        <name>substrate</name>
    </ligand>
</feature>
<feature type="binding site" evidence="1">
    <location>
        <position position="243"/>
    </location>
    <ligand>
        <name>K(+)</name>
        <dbReference type="ChEBI" id="CHEBI:29103"/>
    </ligand>
</feature>
<feature type="binding site" evidence="1">
    <location>
        <position position="246"/>
    </location>
    <ligand>
        <name>K(+)</name>
        <dbReference type="ChEBI" id="CHEBI:29103"/>
    </ligand>
</feature>
<feature type="binding site" evidence="1">
    <location>
        <position position="255"/>
    </location>
    <ligand>
        <name>K(+)</name>
        <dbReference type="ChEBI" id="CHEBI:29103"/>
    </ligand>
</feature>
<proteinExistence type="inferred from homology"/>
<name>PDP_STAAW</name>
<gene>
    <name type="primary">pdp</name>
    <name type="synonym">pyn</name>
    <name type="ordered locus">MW2060</name>
</gene>
<dbReference type="EC" id="2.4.2.2"/>
<dbReference type="EMBL" id="BA000033">
    <property type="protein sequence ID" value="BAB95925.1"/>
    <property type="status" value="ALT_INIT"/>
    <property type="molecule type" value="Genomic_DNA"/>
</dbReference>
<dbReference type="RefSeq" id="WP_001242310.1">
    <property type="nucleotide sequence ID" value="NC_003923.1"/>
</dbReference>
<dbReference type="SMR" id="Q8NVF6"/>
<dbReference type="KEGG" id="sam:MW2060"/>
<dbReference type="HOGENOM" id="CLU_025040_0_1_9"/>
<dbReference type="GO" id="GO:0005829">
    <property type="term" value="C:cytosol"/>
    <property type="evidence" value="ECO:0007669"/>
    <property type="project" value="TreeGrafter"/>
</dbReference>
<dbReference type="GO" id="GO:0004645">
    <property type="term" value="F:1,4-alpha-oligoglucan phosphorylase activity"/>
    <property type="evidence" value="ECO:0007669"/>
    <property type="project" value="InterPro"/>
</dbReference>
<dbReference type="GO" id="GO:0047847">
    <property type="term" value="F:deoxyuridine phosphorylase activity"/>
    <property type="evidence" value="ECO:0007669"/>
    <property type="project" value="RHEA"/>
</dbReference>
<dbReference type="GO" id="GO:0046872">
    <property type="term" value="F:metal ion binding"/>
    <property type="evidence" value="ECO:0007669"/>
    <property type="project" value="UniProtKB-KW"/>
</dbReference>
<dbReference type="GO" id="GO:0009032">
    <property type="term" value="F:thymidine phosphorylase activity"/>
    <property type="evidence" value="ECO:0007669"/>
    <property type="project" value="TreeGrafter"/>
</dbReference>
<dbReference type="GO" id="GO:0004850">
    <property type="term" value="F:uridine phosphorylase activity"/>
    <property type="evidence" value="ECO:0007669"/>
    <property type="project" value="RHEA"/>
</dbReference>
<dbReference type="GO" id="GO:0006206">
    <property type="term" value="P:pyrimidine nucleobase metabolic process"/>
    <property type="evidence" value="ECO:0007669"/>
    <property type="project" value="InterPro"/>
</dbReference>
<dbReference type="GO" id="GO:0006213">
    <property type="term" value="P:pyrimidine nucleoside metabolic process"/>
    <property type="evidence" value="ECO:0007669"/>
    <property type="project" value="InterPro"/>
</dbReference>
<dbReference type="FunFam" id="1.20.970.10:FF:000002">
    <property type="entry name" value="Pyrimidine-nucleoside phosphorylase"/>
    <property type="match status" value="1"/>
</dbReference>
<dbReference type="FunFam" id="3.40.1030.10:FF:000003">
    <property type="entry name" value="Pyrimidine-nucleoside phosphorylase"/>
    <property type="match status" value="1"/>
</dbReference>
<dbReference type="Gene3D" id="3.40.1030.10">
    <property type="entry name" value="Nucleoside phosphorylase/phosphoribosyltransferase catalytic domain"/>
    <property type="match status" value="1"/>
</dbReference>
<dbReference type="Gene3D" id="3.90.1170.30">
    <property type="entry name" value="Pyrimidine nucleoside phosphorylase-like, C-terminal domain"/>
    <property type="match status" value="1"/>
</dbReference>
<dbReference type="Gene3D" id="1.20.970.10">
    <property type="entry name" value="Transferase, Pyrimidine Nucleoside Phosphorylase, Chain C"/>
    <property type="match status" value="1"/>
</dbReference>
<dbReference type="InterPro" id="IPR000312">
    <property type="entry name" value="Glycosyl_Trfase_fam3"/>
</dbReference>
<dbReference type="InterPro" id="IPR017459">
    <property type="entry name" value="Glycosyl_Trfase_fam3_N_dom"/>
</dbReference>
<dbReference type="InterPro" id="IPR036320">
    <property type="entry name" value="Glycosyl_Trfase_fam3_N_dom_sf"/>
</dbReference>
<dbReference type="InterPro" id="IPR035902">
    <property type="entry name" value="Nuc_phospho_transferase"/>
</dbReference>
<dbReference type="InterPro" id="IPR036566">
    <property type="entry name" value="PYNP-like_C_sf"/>
</dbReference>
<dbReference type="InterPro" id="IPR013102">
    <property type="entry name" value="PYNP_C"/>
</dbReference>
<dbReference type="InterPro" id="IPR018090">
    <property type="entry name" value="Pyrmidine_PPas_bac/euk"/>
</dbReference>
<dbReference type="InterPro" id="IPR017872">
    <property type="entry name" value="Pyrmidine_PPase_CS"/>
</dbReference>
<dbReference type="InterPro" id="IPR000053">
    <property type="entry name" value="Thymidine/pyrmidine_PPase"/>
</dbReference>
<dbReference type="NCBIfam" id="NF004490">
    <property type="entry name" value="PRK05820.1"/>
    <property type="match status" value="1"/>
</dbReference>
<dbReference type="NCBIfam" id="NF004747">
    <property type="entry name" value="PRK06078.1"/>
    <property type="match status" value="1"/>
</dbReference>
<dbReference type="NCBIfam" id="TIGR02644">
    <property type="entry name" value="Y_phosphoryl"/>
    <property type="match status" value="1"/>
</dbReference>
<dbReference type="PANTHER" id="PTHR10515">
    <property type="entry name" value="THYMIDINE PHOSPHORYLASE"/>
    <property type="match status" value="1"/>
</dbReference>
<dbReference type="PANTHER" id="PTHR10515:SF0">
    <property type="entry name" value="THYMIDINE PHOSPHORYLASE"/>
    <property type="match status" value="1"/>
</dbReference>
<dbReference type="Pfam" id="PF02885">
    <property type="entry name" value="Glycos_trans_3N"/>
    <property type="match status" value="1"/>
</dbReference>
<dbReference type="Pfam" id="PF00591">
    <property type="entry name" value="Glycos_transf_3"/>
    <property type="match status" value="1"/>
</dbReference>
<dbReference type="Pfam" id="PF07831">
    <property type="entry name" value="PYNP_C"/>
    <property type="match status" value="1"/>
</dbReference>
<dbReference type="PIRSF" id="PIRSF000478">
    <property type="entry name" value="TP_PyNP"/>
    <property type="match status" value="1"/>
</dbReference>
<dbReference type="SMART" id="SM00941">
    <property type="entry name" value="PYNP_C"/>
    <property type="match status" value="1"/>
</dbReference>
<dbReference type="SUPFAM" id="SSF52418">
    <property type="entry name" value="Nucleoside phosphorylase/phosphoribosyltransferase catalytic domain"/>
    <property type="match status" value="1"/>
</dbReference>
<dbReference type="SUPFAM" id="SSF47648">
    <property type="entry name" value="Nucleoside phosphorylase/phosphoribosyltransferase N-terminal domain"/>
    <property type="match status" value="1"/>
</dbReference>
<dbReference type="SUPFAM" id="SSF54680">
    <property type="entry name" value="Pyrimidine nucleoside phosphorylase C-terminal domain"/>
    <property type="match status" value="1"/>
</dbReference>
<dbReference type="PROSITE" id="PS00647">
    <property type="entry name" value="THYMID_PHOSPHORYLASE"/>
    <property type="match status" value="1"/>
</dbReference>